<reference key="1">
    <citation type="submission" date="2007-05" db="EMBL/GenBank/DDBJ databases">
        <title>Complete sequence of chromosome of Staphylococcus aureus subsp. aureus JH9.</title>
        <authorList>
            <consortium name="US DOE Joint Genome Institute"/>
            <person name="Copeland A."/>
            <person name="Lucas S."/>
            <person name="Lapidus A."/>
            <person name="Barry K."/>
            <person name="Detter J.C."/>
            <person name="Glavina del Rio T."/>
            <person name="Hammon N."/>
            <person name="Israni S."/>
            <person name="Pitluck S."/>
            <person name="Chain P."/>
            <person name="Malfatti S."/>
            <person name="Shin M."/>
            <person name="Vergez L."/>
            <person name="Schmutz J."/>
            <person name="Larimer F."/>
            <person name="Land M."/>
            <person name="Hauser L."/>
            <person name="Kyrpides N."/>
            <person name="Kim E."/>
            <person name="Tomasz A."/>
            <person name="Richardson P."/>
        </authorList>
    </citation>
    <scope>NUCLEOTIDE SEQUENCE [LARGE SCALE GENOMIC DNA]</scope>
    <source>
        <strain>JH9</strain>
    </source>
</reference>
<name>RSMA_STAA9</name>
<organism>
    <name type="scientific">Staphylococcus aureus (strain JH9)</name>
    <dbReference type="NCBI Taxonomy" id="359786"/>
    <lineage>
        <taxon>Bacteria</taxon>
        <taxon>Bacillati</taxon>
        <taxon>Bacillota</taxon>
        <taxon>Bacilli</taxon>
        <taxon>Bacillales</taxon>
        <taxon>Staphylococcaceae</taxon>
        <taxon>Staphylococcus</taxon>
    </lineage>
</organism>
<protein>
    <recommendedName>
        <fullName evidence="1">Ribosomal RNA small subunit methyltransferase A</fullName>
        <ecNumber evidence="1">2.1.1.182</ecNumber>
    </recommendedName>
    <alternativeName>
        <fullName evidence="1">16S rRNA (adenine(1518)-N(6)/adenine(1519)-N(6))-dimethyltransferase</fullName>
    </alternativeName>
    <alternativeName>
        <fullName evidence="1">16S rRNA dimethyladenosine transferase</fullName>
    </alternativeName>
    <alternativeName>
        <fullName evidence="1">16S rRNA dimethylase</fullName>
    </alternativeName>
    <alternativeName>
        <fullName evidence="1">S-adenosylmethionine-6-N', N'-adenosyl(rRNA) dimethyltransferase</fullName>
    </alternativeName>
</protein>
<evidence type="ECO:0000255" key="1">
    <source>
        <dbReference type="HAMAP-Rule" id="MF_00607"/>
    </source>
</evidence>
<feature type="chain" id="PRO_1000082565" description="Ribosomal RNA small subunit methyltransferase A">
    <location>
        <begin position="1"/>
        <end position="297"/>
    </location>
</feature>
<feature type="binding site" evidence="1">
    <location>
        <position position="31"/>
    </location>
    <ligand>
        <name>S-adenosyl-L-methionine</name>
        <dbReference type="ChEBI" id="CHEBI:59789"/>
    </ligand>
</feature>
<feature type="binding site" evidence="1">
    <location>
        <position position="33"/>
    </location>
    <ligand>
        <name>S-adenosyl-L-methionine</name>
        <dbReference type="ChEBI" id="CHEBI:59789"/>
    </ligand>
</feature>
<feature type="binding site" evidence="1">
    <location>
        <position position="58"/>
    </location>
    <ligand>
        <name>S-adenosyl-L-methionine</name>
        <dbReference type="ChEBI" id="CHEBI:59789"/>
    </ligand>
</feature>
<feature type="binding site" evidence="1">
    <location>
        <position position="79"/>
    </location>
    <ligand>
        <name>S-adenosyl-L-methionine</name>
        <dbReference type="ChEBI" id="CHEBI:59789"/>
    </ligand>
</feature>
<feature type="binding site" evidence="1">
    <location>
        <position position="104"/>
    </location>
    <ligand>
        <name>S-adenosyl-L-methionine</name>
        <dbReference type="ChEBI" id="CHEBI:59789"/>
    </ligand>
</feature>
<feature type="binding site" evidence="1">
    <location>
        <position position="129"/>
    </location>
    <ligand>
        <name>S-adenosyl-L-methionine</name>
        <dbReference type="ChEBI" id="CHEBI:59789"/>
    </ligand>
</feature>
<comment type="function">
    <text evidence="1">Specifically dimethylates two adjacent adenosines (A1518 and A1519) in the loop of a conserved hairpin near the 3'-end of 16S rRNA in the 30S particle. May play a critical role in biogenesis of 30S subunits.</text>
</comment>
<comment type="catalytic activity">
    <reaction evidence="1">
        <text>adenosine(1518)/adenosine(1519) in 16S rRNA + 4 S-adenosyl-L-methionine = N(6)-dimethyladenosine(1518)/N(6)-dimethyladenosine(1519) in 16S rRNA + 4 S-adenosyl-L-homocysteine + 4 H(+)</text>
        <dbReference type="Rhea" id="RHEA:19609"/>
        <dbReference type="Rhea" id="RHEA-COMP:10232"/>
        <dbReference type="Rhea" id="RHEA-COMP:10233"/>
        <dbReference type="ChEBI" id="CHEBI:15378"/>
        <dbReference type="ChEBI" id="CHEBI:57856"/>
        <dbReference type="ChEBI" id="CHEBI:59789"/>
        <dbReference type="ChEBI" id="CHEBI:74411"/>
        <dbReference type="ChEBI" id="CHEBI:74493"/>
        <dbReference type="EC" id="2.1.1.182"/>
    </reaction>
</comment>
<comment type="subcellular location">
    <subcellularLocation>
        <location evidence="1">Cytoplasm</location>
    </subcellularLocation>
</comment>
<comment type="similarity">
    <text evidence="1">Belongs to the class I-like SAM-binding methyltransferase superfamily. rRNA adenine N(6)-methyltransferase family. RsmA subfamily.</text>
</comment>
<gene>
    <name evidence="1" type="primary">rsmA</name>
    <name evidence="1" type="synonym">ksgA</name>
    <name type="ordered locus">SaurJH9_0514</name>
</gene>
<accession>A5IQ45</accession>
<keyword id="KW-0963">Cytoplasm</keyword>
<keyword id="KW-0489">Methyltransferase</keyword>
<keyword id="KW-0694">RNA-binding</keyword>
<keyword id="KW-0698">rRNA processing</keyword>
<keyword id="KW-0949">S-adenosyl-L-methionine</keyword>
<keyword id="KW-0808">Transferase</keyword>
<dbReference type="EC" id="2.1.1.182" evidence="1"/>
<dbReference type="EMBL" id="CP000703">
    <property type="protein sequence ID" value="ABQ48318.1"/>
    <property type="molecule type" value="Genomic_DNA"/>
</dbReference>
<dbReference type="RefSeq" id="WP_000886500.1">
    <property type="nucleotide sequence ID" value="NC_009487.1"/>
</dbReference>
<dbReference type="SMR" id="A5IQ45"/>
<dbReference type="KEGG" id="saj:SaurJH9_0514"/>
<dbReference type="HOGENOM" id="CLU_041220_0_0_9"/>
<dbReference type="GO" id="GO:0005829">
    <property type="term" value="C:cytosol"/>
    <property type="evidence" value="ECO:0007669"/>
    <property type="project" value="TreeGrafter"/>
</dbReference>
<dbReference type="GO" id="GO:0052908">
    <property type="term" value="F:16S rRNA (adenine(1518)-N(6)/adenine(1519)-N(6))-dimethyltransferase activity"/>
    <property type="evidence" value="ECO:0007669"/>
    <property type="project" value="UniProtKB-EC"/>
</dbReference>
<dbReference type="GO" id="GO:0003723">
    <property type="term" value="F:RNA binding"/>
    <property type="evidence" value="ECO:0007669"/>
    <property type="project" value="UniProtKB-KW"/>
</dbReference>
<dbReference type="CDD" id="cd02440">
    <property type="entry name" value="AdoMet_MTases"/>
    <property type="match status" value="1"/>
</dbReference>
<dbReference type="FunFam" id="1.10.8.100:FF:000002">
    <property type="entry name" value="Ribosomal RNA small subunit methyltransferase A"/>
    <property type="match status" value="1"/>
</dbReference>
<dbReference type="FunFam" id="3.40.50.150:FF:000023">
    <property type="entry name" value="Ribosomal RNA small subunit methyltransferase A"/>
    <property type="match status" value="1"/>
</dbReference>
<dbReference type="Gene3D" id="1.10.8.100">
    <property type="entry name" value="Ribosomal RNA adenine dimethylase-like, domain 2"/>
    <property type="match status" value="1"/>
</dbReference>
<dbReference type="Gene3D" id="3.40.50.150">
    <property type="entry name" value="Vaccinia Virus protein VP39"/>
    <property type="match status" value="1"/>
</dbReference>
<dbReference type="HAMAP" id="MF_00607">
    <property type="entry name" value="16SrRNA_methyltr_A"/>
    <property type="match status" value="1"/>
</dbReference>
<dbReference type="InterPro" id="IPR001737">
    <property type="entry name" value="KsgA/Erm"/>
</dbReference>
<dbReference type="InterPro" id="IPR023165">
    <property type="entry name" value="rRNA_Ade_diMease-like_C"/>
</dbReference>
<dbReference type="InterPro" id="IPR020596">
    <property type="entry name" value="rRNA_Ade_Mease_Trfase_CS"/>
</dbReference>
<dbReference type="InterPro" id="IPR020598">
    <property type="entry name" value="rRNA_Ade_methylase_Trfase_N"/>
</dbReference>
<dbReference type="InterPro" id="IPR011530">
    <property type="entry name" value="rRNA_adenine_dimethylase"/>
</dbReference>
<dbReference type="InterPro" id="IPR029063">
    <property type="entry name" value="SAM-dependent_MTases_sf"/>
</dbReference>
<dbReference type="NCBIfam" id="TIGR00755">
    <property type="entry name" value="ksgA"/>
    <property type="match status" value="1"/>
</dbReference>
<dbReference type="PANTHER" id="PTHR11727">
    <property type="entry name" value="DIMETHYLADENOSINE TRANSFERASE"/>
    <property type="match status" value="1"/>
</dbReference>
<dbReference type="PANTHER" id="PTHR11727:SF7">
    <property type="entry name" value="DIMETHYLADENOSINE TRANSFERASE-RELATED"/>
    <property type="match status" value="1"/>
</dbReference>
<dbReference type="Pfam" id="PF00398">
    <property type="entry name" value="RrnaAD"/>
    <property type="match status" value="1"/>
</dbReference>
<dbReference type="SMART" id="SM00650">
    <property type="entry name" value="rADc"/>
    <property type="match status" value="1"/>
</dbReference>
<dbReference type="SUPFAM" id="SSF53335">
    <property type="entry name" value="S-adenosyl-L-methionine-dependent methyltransferases"/>
    <property type="match status" value="1"/>
</dbReference>
<dbReference type="PROSITE" id="PS01131">
    <property type="entry name" value="RRNA_A_DIMETH"/>
    <property type="match status" value="1"/>
</dbReference>
<dbReference type="PROSITE" id="PS51689">
    <property type="entry name" value="SAM_RNA_A_N6_MT"/>
    <property type="match status" value="1"/>
</dbReference>
<sequence>MLDNKDIATPSRTRALLDKYGFNFKKSLGQNFLIDVNIINNIIDASDIDAQTGVIEIGPGMGSLTEQLARHAKRVLAFEIDQRLIPVLNDTLSPYDNVTVINEDILKANIKEAVENHLQDCEKIMVVANLPYYITTPILLNLMQQDIPIDGYVVMMQKEVGERLNAEVGSKAYGSLSIVVQYYTETSKVLTVPKSVFMPPPNVDSIVVKLMQRTEPLVTVDNEEAFFKLAKAAFAQRRKTINNNYQNYFKDGKQHKEVILQWLEQAGIDPRRRGETLSIQDFAKLYEEKKKFPQLEN</sequence>
<proteinExistence type="inferred from homology"/>